<evidence type="ECO:0000255" key="1">
    <source>
        <dbReference type="HAMAP-Rule" id="MF_01318"/>
    </source>
</evidence>
<evidence type="ECO:0000305" key="2"/>
<gene>
    <name evidence="1" type="primary">rplA</name>
    <name type="ordered locus">PERMA_1186</name>
</gene>
<proteinExistence type="inferred from homology"/>
<dbReference type="EMBL" id="CP001230">
    <property type="protein sequence ID" value="ACO03078.1"/>
    <property type="molecule type" value="Genomic_DNA"/>
</dbReference>
<dbReference type="RefSeq" id="WP_012675317.1">
    <property type="nucleotide sequence ID" value="NC_012440.1"/>
</dbReference>
<dbReference type="SMR" id="C0QQL3"/>
<dbReference type="STRING" id="123214.PERMA_1186"/>
<dbReference type="PaxDb" id="123214-PERMA_1186"/>
<dbReference type="KEGG" id="pmx:PERMA_1186"/>
<dbReference type="eggNOG" id="COG0081">
    <property type="taxonomic scope" value="Bacteria"/>
</dbReference>
<dbReference type="HOGENOM" id="CLU_062853_0_0_0"/>
<dbReference type="OrthoDB" id="9803740at2"/>
<dbReference type="Proteomes" id="UP000001366">
    <property type="component" value="Chromosome"/>
</dbReference>
<dbReference type="GO" id="GO:0015934">
    <property type="term" value="C:large ribosomal subunit"/>
    <property type="evidence" value="ECO:0007669"/>
    <property type="project" value="InterPro"/>
</dbReference>
<dbReference type="GO" id="GO:0019843">
    <property type="term" value="F:rRNA binding"/>
    <property type="evidence" value="ECO:0007669"/>
    <property type="project" value="UniProtKB-UniRule"/>
</dbReference>
<dbReference type="GO" id="GO:0003735">
    <property type="term" value="F:structural constituent of ribosome"/>
    <property type="evidence" value="ECO:0007669"/>
    <property type="project" value="InterPro"/>
</dbReference>
<dbReference type="GO" id="GO:0000049">
    <property type="term" value="F:tRNA binding"/>
    <property type="evidence" value="ECO:0007669"/>
    <property type="project" value="UniProtKB-KW"/>
</dbReference>
<dbReference type="GO" id="GO:0006417">
    <property type="term" value="P:regulation of translation"/>
    <property type="evidence" value="ECO:0007669"/>
    <property type="project" value="UniProtKB-KW"/>
</dbReference>
<dbReference type="GO" id="GO:0006412">
    <property type="term" value="P:translation"/>
    <property type="evidence" value="ECO:0007669"/>
    <property type="project" value="UniProtKB-UniRule"/>
</dbReference>
<dbReference type="CDD" id="cd00403">
    <property type="entry name" value="Ribosomal_L1"/>
    <property type="match status" value="1"/>
</dbReference>
<dbReference type="FunFam" id="3.40.50.790:FF:000001">
    <property type="entry name" value="50S ribosomal protein L1"/>
    <property type="match status" value="1"/>
</dbReference>
<dbReference type="Gene3D" id="3.30.190.20">
    <property type="match status" value="1"/>
</dbReference>
<dbReference type="Gene3D" id="3.40.50.790">
    <property type="match status" value="1"/>
</dbReference>
<dbReference type="HAMAP" id="MF_01318_B">
    <property type="entry name" value="Ribosomal_uL1_B"/>
    <property type="match status" value="1"/>
</dbReference>
<dbReference type="InterPro" id="IPR005878">
    <property type="entry name" value="Ribosom_uL1_bac-type"/>
</dbReference>
<dbReference type="InterPro" id="IPR002143">
    <property type="entry name" value="Ribosomal_uL1"/>
</dbReference>
<dbReference type="InterPro" id="IPR023674">
    <property type="entry name" value="Ribosomal_uL1-like"/>
</dbReference>
<dbReference type="InterPro" id="IPR028364">
    <property type="entry name" value="Ribosomal_uL1/biogenesis"/>
</dbReference>
<dbReference type="InterPro" id="IPR016095">
    <property type="entry name" value="Ribosomal_uL1_3-a/b-sand"/>
</dbReference>
<dbReference type="InterPro" id="IPR023673">
    <property type="entry name" value="Ribosomal_uL1_CS"/>
</dbReference>
<dbReference type="NCBIfam" id="TIGR01169">
    <property type="entry name" value="rplA_bact"/>
    <property type="match status" value="1"/>
</dbReference>
<dbReference type="PANTHER" id="PTHR36427">
    <property type="entry name" value="54S RIBOSOMAL PROTEIN L1, MITOCHONDRIAL"/>
    <property type="match status" value="1"/>
</dbReference>
<dbReference type="PANTHER" id="PTHR36427:SF3">
    <property type="entry name" value="LARGE RIBOSOMAL SUBUNIT PROTEIN UL1M"/>
    <property type="match status" value="1"/>
</dbReference>
<dbReference type="Pfam" id="PF00687">
    <property type="entry name" value="Ribosomal_L1"/>
    <property type="match status" value="1"/>
</dbReference>
<dbReference type="PIRSF" id="PIRSF002155">
    <property type="entry name" value="Ribosomal_L1"/>
    <property type="match status" value="1"/>
</dbReference>
<dbReference type="SUPFAM" id="SSF56808">
    <property type="entry name" value="Ribosomal protein L1"/>
    <property type="match status" value="1"/>
</dbReference>
<dbReference type="PROSITE" id="PS01199">
    <property type="entry name" value="RIBOSOMAL_L1"/>
    <property type="match status" value="1"/>
</dbReference>
<comment type="function">
    <text evidence="1">Binds directly to 23S rRNA. The L1 stalk is quite mobile in the ribosome, and is involved in E site tRNA release.</text>
</comment>
<comment type="function">
    <text evidence="1">Protein L1 is also a translational repressor protein, it controls the translation of the L11 operon by binding to its mRNA.</text>
</comment>
<comment type="subunit">
    <text evidence="1">Part of the 50S ribosomal subunit.</text>
</comment>
<comment type="similarity">
    <text evidence="1">Belongs to the universal ribosomal protein uL1 family.</text>
</comment>
<protein>
    <recommendedName>
        <fullName evidence="1">Large ribosomal subunit protein uL1</fullName>
    </recommendedName>
    <alternativeName>
        <fullName evidence="2">50S ribosomal protein L1</fullName>
    </alternativeName>
</protein>
<name>RL1_PERMH</name>
<feature type="chain" id="PRO_1000165693" description="Large ribosomal subunit protein uL1">
    <location>
        <begin position="1"/>
        <end position="242"/>
    </location>
</feature>
<organism>
    <name type="scientific">Persephonella marina (strain DSM 14350 / EX-H1)</name>
    <dbReference type="NCBI Taxonomy" id="123214"/>
    <lineage>
        <taxon>Bacteria</taxon>
        <taxon>Pseudomonadati</taxon>
        <taxon>Aquificota</taxon>
        <taxon>Aquificia</taxon>
        <taxon>Aquificales</taxon>
        <taxon>Hydrogenothermaceae</taxon>
        <taxon>Persephonella</taxon>
    </lineage>
</organism>
<keyword id="KW-1185">Reference proteome</keyword>
<keyword id="KW-0678">Repressor</keyword>
<keyword id="KW-0687">Ribonucleoprotein</keyword>
<keyword id="KW-0689">Ribosomal protein</keyword>
<keyword id="KW-0694">RNA-binding</keyword>
<keyword id="KW-0699">rRNA-binding</keyword>
<keyword id="KW-0810">Translation regulation</keyword>
<keyword id="KW-0820">tRNA-binding</keyword>
<sequence>MAKRGKKYLKALELVDKDKLYSIEEAVETLKKMEEVLQRKFDETVELIFRLGVDPKYADQMVRGSVVLPHGLGKELKVLVITQGEKVKEAEEAGADYVGGEDMINKILNENWLDFDVVIATPDMMPKVAKLGRVLGPRGLMPNPKVGTVTQDVKKAVTEAKKGRVEFKVDKTGNLHVPIGKISFDNNKLVENALEVIETVQKLRPSGLKGQYIKNMVMKTTMSPSVKLDVLSILRSLEAKAA</sequence>
<accession>C0QQL3</accession>
<reference key="1">
    <citation type="journal article" date="2009" name="J. Bacteriol.">
        <title>Complete and draft genome sequences of six members of the Aquificales.</title>
        <authorList>
            <person name="Reysenbach A.-L."/>
            <person name="Hamamura N."/>
            <person name="Podar M."/>
            <person name="Griffiths E."/>
            <person name="Ferreira S."/>
            <person name="Hochstein R."/>
            <person name="Heidelberg J."/>
            <person name="Johnson J."/>
            <person name="Mead D."/>
            <person name="Pohorille A."/>
            <person name="Sarmiento M."/>
            <person name="Schweighofer K."/>
            <person name="Seshadri R."/>
            <person name="Voytek M.A."/>
        </authorList>
    </citation>
    <scope>NUCLEOTIDE SEQUENCE [LARGE SCALE GENOMIC DNA]</scope>
    <source>
        <strain>DSM 14350 / EX-H1</strain>
    </source>
</reference>